<name>HIS1_PASMU</name>
<reference key="1">
    <citation type="journal article" date="2001" name="Proc. Natl. Acad. Sci. U.S.A.">
        <title>Complete genomic sequence of Pasteurella multocida Pm70.</title>
        <authorList>
            <person name="May B.J."/>
            <person name="Zhang Q."/>
            <person name="Li L.L."/>
            <person name="Paustian M.L."/>
            <person name="Whittam T.S."/>
            <person name="Kapur V."/>
        </authorList>
    </citation>
    <scope>NUCLEOTIDE SEQUENCE [LARGE SCALE GENOMIC DNA]</scope>
    <source>
        <strain>Pm70</strain>
    </source>
</reference>
<feature type="chain" id="PRO_0000151858" description="ATP phosphoribosyltransferase">
    <location>
        <begin position="1"/>
        <end position="299"/>
    </location>
</feature>
<dbReference type="EC" id="2.4.2.17"/>
<dbReference type="EMBL" id="AE004439">
    <property type="protein sequence ID" value="AAK03279.1"/>
    <property type="molecule type" value="Genomic_DNA"/>
</dbReference>
<dbReference type="RefSeq" id="WP_005717575.1">
    <property type="nucleotide sequence ID" value="NC_002663.1"/>
</dbReference>
<dbReference type="SMR" id="P57919"/>
<dbReference type="STRING" id="272843.PM1195"/>
<dbReference type="EnsemblBacteria" id="AAK03279">
    <property type="protein sequence ID" value="AAK03279"/>
    <property type="gene ID" value="PM1195"/>
</dbReference>
<dbReference type="GeneID" id="77206510"/>
<dbReference type="KEGG" id="pmu:PM1195"/>
<dbReference type="HOGENOM" id="CLU_038115_1_0_6"/>
<dbReference type="OrthoDB" id="9801867at2"/>
<dbReference type="UniPathway" id="UPA00031">
    <property type="reaction ID" value="UER00006"/>
</dbReference>
<dbReference type="Proteomes" id="UP000000809">
    <property type="component" value="Chromosome"/>
</dbReference>
<dbReference type="GO" id="GO:0005737">
    <property type="term" value="C:cytoplasm"/>
    <property type="evidence" value="ECO:0007669"/>
    <property type="project" value="UniProtKB-SubCell"/>
</dbReference>
<dbReference type="GO" id="GO:0005524">
    <property type="term" value="F:ATP binding"/>
    <property type="evidence" value="ECO:0007669"/>
    <property type="project" value="UniProtKB-KW"/>
</dbReference>
<dbReference type="GO" id="GO:0003879">
    <property type="term" value="F:ATP phosphoribosyltransferase activity"/>
    <property type="evidence" value="ECO:0007669"/>
    <property type="project" value="UniProtKB-UniRule"/>
</dbReference>
<dbReference type="GO" id="GO:0000287">
    <property type="term" value="F:magnesium ion binding"/>
    <property type="evidence" value="ECO:0007669"/>
    <property type="project" value="UniProtKB-UniRule"/>
</dbReference>
<dbReference type="GO" id="GO:0000105">
    <property type="term" value="P:L-histidine biosynthetic process"/>
    <property type="evidence" value="ECO:0007669"/>
    <property type="project" value="UniProtKB-UniRule"/>
</dbReference>
<dbReference type="CDD" id="cd13592">
    <property type="entry name" value="PBP2_HisGL2"/>
    <property type="match status" value="1"/>
</dbReference>
<dbReference type="FunFam" id="3.30.70.120:FF:000002">
    <property type="entry name" value="ATP phosphoribosyltransferase"/>
    <property type="match status" value="1"/>
</dbReference>
<dbReference type="FunFam" id="3.40.190.10:FF:000008">
    <property type="entry name" value="ATP phosphoribosyltransferase"/>
    <property type="match status" value="1"/>
</dbReference>
<dbReference type="Gene3D" id="3.30.70.120">
    <property type="match status" value="1"/>
</dbReference>
<dbReference type="Gene3D" id="3.40.190.10">
    <property type="entry name" value="Periplasmic binding protein-like II"/>
    <property type="match status" value="2"/>
</dbReference>
<dbReference type="HAMAP" id="MF_00079">
    <property type="entry name" value="HisG_Long"/>
    <property type="match status" value="1"/>
</dbReference>
<dbReference type="InterPro" id="IPR020621">
    <property type="entry name" value="ATP-PRT_HisG_long"/>
</dbReference>
<dbReference type="InterPro" id="IPR013820">
    <property type="entry name" value="ATP_PRibTrfase_cat"/>
</dbReference>
<dbReference type="InterPro" id="IPR018198">
    <property type="entry name" value="ATP_PRibTrfase_CS"/>
</dbReference>
<dbReference type="InterPro" id="IPR001348">
    <property type="entry name" value="ATP_PRibTrfase_HisG"/>
</dbReference>
<dbReference type="InterPro" id="IPR013115">
    <property type="entry name" value="HisG_C"/>
</dbReference>
<dbReference type="InterPro" id="IPR011322">
    <property type="entry name" value="N-reg_PII-like_a/b"/>
</dbReference>
<dbReference type="InterPro" id="IPR015867">
    <property type="entry name" value="N-reg_PII/ATP_PRibTrfase_C"/>
</dbReference>
<dbReference type="NCBIfam" id="TIGR00070">
    <property type="entry name" value="hisG"/>
    <property type="match status" value="1"/>
</dbReference>
<dbReference type="NCBIfam" id="TIGR03455">
    <property type="entry name" value="HisG_C-term"/>
    <property type="match status" value="1"/>
</dbReference>
<dbReference type="PANTHER" id="PTHR21403:SF8">
    <property type="entry name" value="ATP PHOSPHORIBOSYLTRANSFERASE"/>
    <property type="match status" value="1"/>
</dbReference>
<dbReference type="PANTHER" id="PTHR21403">
    <property type="entry name" value="ATP PHOSPHORIBOSYLTRANSFERASE ATP-PRTASE"/>
    <property type="match status" value="1"/>
</dbReference>
<dbReference type="Pfam" id="PF01634">
    <property type="entry name" value="HisG"/>
    <property type="match status" value="1"/>
</dbReference>
<dbReference type="Pfam" id="PF08029">
    <property type="entry name" value="HisG_C"/>
    <property type="match status" value="1"/>
</dbReference>
<dbReference type="SUPFAM" id="SSF54913">
    <property type="entry name" value="GlnB-like"/>
    <property type="match status" value="1"/>
</dbReference>
<dbReference type="SUPFAM" id="SSF53850">
    <property type="entry name" value="Periplasmic binding protein-like II"/>
    <property type="match status" value="1"/>
</dbReference>
<dbReference type="PROSITE" id="PS01316">
    <property type="entry name" value="ATP_P_PHORIBOSYLTR"/>
    <property type="match status" value="1"/>
</dbReference>
<protein>
    <recommendedName>
        <fullName>ATP phosphoribosyltransferase</fullName>
        <shortName>ATP-PRT</shortName>
        <shortName>ATP-PRTase</shortName>
        <ecNumber>2.4.2.17</ecNumber>
    </recommendedName>
</protein>
<evidence type="ECO:0000250" key="1"/>
<evidence type="ECO:0000305" key="2"/>
<comment type="function">
    <text evidence="1">Catalyzes the condensation of ATP and 5-phosphoribose 1-diphosphate to form N'-(5'-phosphoribosyl)-ATP (PR-ATP). Has a crucial role in the pathway because the rate of histidine biosynthesis seems to be controlled primarily by regulation of HisG enzymatic activity (By similarity).</text>
</comment>
<comment type="catalytic activity">
    <reaction>
        <text>1-(5-phospho-beta-D-ribosyl)-ATP + diphosphate = 5-phospho-alpha-D-ribose 1-diphosphate + ATP</text>
        <dbReference type="Rhea" id="RHEA:18473"/>
        <dbReference type="ChEBI" id="CHEBI:30616"/>
        <dbReference type="ChEBI" id="CHEBI:33019"/>
        <dbReference type="ChEBI" id="CHEBI:58017"/>
        <dbReference type="ChEBI" id="CHEBI:73183"/>
        <dbReference type="EC" id="2.4.2.17"/>
    </reaction>
</comment>
<comment type="cofactor">
    <cofactor evidence="1">
        <name>Mg(2+)</name>
        <dbReference type="ChEBI" id="CHEBI:18420"/>
    </cofactor>
</comment>
<comment type="activity regulation">
    <text evidence="1">Feedback inhibited by histidine.</text>
</comment>
<comment type="pathway">
    <text>Amino-acid biosynthesis; L-histidine biosynthesis; L-histidine from 5-phospho-alpha-D-ribose 1-diphosphate: step 1/9.</text>
</comment>
<comment type="subcellular location">
    <subcellularLocation>
        <location evidence="1">Cytoplasm</location>
    </subcellularLocation>
</comment>
<comment type="similarity">
    <text evidence="2">Belongs to the ATP phosphoribosyltransferase family. Long subfamily.</text>
</comment>
<proteinExistence type="inferred from homology"/>
<gene>
    <name type="primary">hisG</name>
    <name type="ordered locus">PM1195</name>
</gene>
<sequence>MIESKRLRIAMQKSGRLSQESQALLKQCGVKINLQEQRLIAYAENMPIDILRVRDDDIPGLVFDGVVDLGIIGENVLEEEELTRQAAGETVNYKKLRRLDFGGCRLSIAIPQDEAYNGISDLKNARIATSYPNLLKRYMQQQGVDFKTCSLTGSVEVAPRAGLADAICDLVSSGATLEANGLKEVEIIYRSKSCLIQRAAELSPEKQALVDKLLTRIQGVQQAAESKYIMLHAPKEKLEEITALLPGVENPTILPLAHDNSKVAMHVVSQENLFWETMEQLKDAGASSILVLPIEKMMG</sequence>
<keyword id="KW-0028">Amino-acid biosynthesis</keyword>
<keyword id="KW-0067">ATP-binding</keyword>
<keyword id="KW-0963">Cytoplasm</keyword>
<keyword id="KW-0328">Glycosyltransferase</keyword>
<keyword id="KW-0368">Histidine biosynthesis</keyword>
<keyword id="KW-0460">Magnesium</keyword>
<keyword id="KW-0479">Metal-binding</keyword>
<keyword id="KW-0547">Nucleotide-binding</keyword>
<keyword id="KW-1185">Reference proteome</keyword>
<keyword id="KW-0808">Transferase</keyword>
<organism>
    <name type="scientific">Pasteurella multocida (strain Pm70)</name>
    <dbReference type="NCBI Taxonomy" id="272843"/>
    <lineage>
        <taxon>Bacteria</taxon>
        <taxon>Pseudomonadati</taxon>
        <taxon>Pseudomonadota</taxon>
        <taxon>Gammaproteobacteria</taxon>
        <taxon>Pasteurellales</taxon>
        <taxon>Pasteurellaceae</taxon>
        <taxon>Pasteurella</taxon>
    </lineage>
</organism>
<accession>P57919</accession>